<sequence>QHLFWFFGHPEVYILILPGFGMVSHIVAYYAGKKEPFGYMGMVWAMMAIGLLGFIVWAHHMFTVGMDVDTRAYFTSATMVIAIPTGVKVFSWLATLHGGAIKWETPLLWALGFIFLFTVGGLTGIVLANSSLDIVLHDTYYVVAHFHYVLSMGAVFAIMGGFVHWFPLFSGYTLHPTWSKIHFGVMFV</sequence>
<dbReference type="EC" id="7.1.1.9"/>
<dbReference type="EMBL" id="M64885">
    <property type="protein sequence ID" value="AAB01437.1"/>
    <property type="molecule type" value="Genomic_DNA"/>
</dbReference>
<dbReference type="SMR" id="P29643"/>
<dbReference type="UniPathway" id="UPA00705"/>
<dbReference type="GO" id="GO:0005743">
    <property type="term" value="C:mitochondrial inner membrane"/>
    <property type="evidence" value="ECO:0007669"/>
    <property type="project" value="UniProtKB-SubCell"/>
</dbReference>
<dbReference type="GO" id="GO:0045277">
    <property type="term" value="C:respiratory chain complex IV"/>
    <property type="evidence" value="ECO:0000250"/>
    <property type="project" value="UniProtKB"/>
</dbReference>
<dbReference type="GO" id="GO:0004129">
    <property type="term" value="F:cytochrome-c oxidase activity"/>
    <property type="evidence" value="ECO:0007669"/>
    <property type="project" value="UniProtKB-EC"/>
</dbReference>
<dbReference type="GO" id="GO:0020037">
    <property type="term" value="F:heme binding"/>
    <property type="evidence" value="ECO:0007669"/>
    <property type="project" value="InterPro"/>
</dbReference>
<dbReference type="GO" id="GO:0046872">
    <property type="term" value="F:metal ion binding"/>
    <property type="evidence" value="ECO:0007669"/>
    <property type="project" value="UniProtKB-KW"/>
</dbReference>
<dbReference type="GO" id="GO:0015990">
    <property type="term" value="P:electron transport coupled proton transport"/>
    <property type="evidence" value="ECO:0007669"/>
    <property type="project" value="TreeGrafter"/>
</dbReference>
<dbReference type="GO" id="GO:0006123">
    <property type="term" value="P:mitochondrial electron transport, cytochrome c to oxygen"/>
    <property type="evidence" value="ECO:0007669"/>
    <property type="project" value="TreeGrafter"/>
</dbReference>
<dbReference type="FunFam" id="1.20.210.10:FF:000009">
    <property type="entry name" value="Cytochrome c oxidase subunit 1"/>
    <property type="match status" value="1"/>
</dbReference>
<dbReference type="Gene3D" id="1.20.210.10">
    <property type="entry name" value="Cytochrome c oxidase-like, subunit I domain"/>
    <property type="match status" value="1"/>
</dbReference>
<dbReference type="InterPro" id="IPR023616">
    <property type="entry name" value="Cyt_c_oxase-like_su1_dom"/>
</dbReference>
<dbReference type="InterPro" id="IPR036927">
    <property type="entry name" value="Cyt_c_oxase-like_su1_sf"/>
</dbReference>
<dbReference type="InterPro" id="IPR000883">
    <property type="entry name" value="Cyt_C_Oxase_1"/>
</dbReference>
<dbReference type="InterPro" id="IPR023615">
    <property type="entry name" value="Cyt_c_Oxase_su1_BS"/>
</dbReference>
<dbReference type="PANTHER" id="PTHR10422">
    <property type="entry name" value="CYTOCHROME C OXIDASE SUBUNIT 1"/>
    <property type="match status" value="1"/>
</dbReference>
<dbReference type="PANTHER" id="PTHR10422:SF18">
    <property type="entry name" value="CYTOCHROME C OXIDASE SUBUNIT 1"/>
    <property type="match status" value="1"/>
</dbReference>
<dbReference type="Pfam" id="PF00115">
    <property type="entry name" value="COX1"/>
    <property type="match status" value="1"/>
</dbReference>
<dbReference type="PRINTS" id="PR01165">
    <property type="entry name" value="CYCOXIDASEI"/>
</dbReference>
<dbReference type="SUPFAM" id="SSF81442">
    <property type="entry name" value="Cytochrome c oxidase subunit I-like"/>
    <property type="match status" value="1"/>
</dbReference>
<dbReference type="PROSITE" id="PS50855">
    <property type="entry name" value="COX1"/>
    <property type="match status" value="1"/>
</dbReference>
<dbReference type="PROSITE" id="PS00077">
    <property type="entry name" value="COX1_CUB"/>
    <property type="match status" value="1"/>
</dbReference>
<gene>
    <name type="primary">mt-co1</name>
    <name type="synonym">coi</name>
    <name type="synonym">coxi</name>
    <name type="synonym">mtco1</name>
</gene>
<protein>
    <recommendedName>
        <fullName>Cytochrome c oxidase subunit 1</fullName>
        <ecNumber>7.1.1.9</ecNumber>
    </recommendedName>
    <alternativeName>
        <fullName>Cytochrome c oxidase polypeptide I</fullName>
    </alternativeName>
</protein>
<keyword id="KW-0186">Copper</keyword>
<keyword id="KW-0249">Electron transport</keyword>
<keyword id="KW-0349">Heme</keyword>
<keyword id="KW-0408">Iron</keyword>
<keyword id="KW-0460">Magnesium</keyword>
<keyword id="KW-0472">Membrane</keyword>
<keyword id="KW-0479">Metal-binding</keyword>
<keyword id="KW-0496">Mitochondrion</keyword>
<keyword id="KW-0999">Mitochondrion inner membrane</keyword>
<keyword id="KW-0679">Respiratory chain</keyword>
<keyword id="KW-0915">Sodium</keyword>
<keyword id="KW-1278">Translocase</keyword>
<keyword id="KW-0812">Transmembrane</keyword>
<keyword id="KW-1133">Transmembrane helix</keyword>
<keyword id="KW-0813">Transport</keyword>
<accession>P29643</accession>
<feature type="chain" id="PRO_0000183280" description="Cytochrome c oxidase subunit 1">
    <location>
        <begin position="1" status="less than"/>
        <end position="188" status="greater than"/>
    </location>
</feature>
<feature type="transmembrane region" description="Helical; Name=VI" evidence="2">
    <location>
        <begin position="1" status="less than"/>
        <end position="30"/>
    </location>
</feature>
<feature type="topological domain" description="Mitochondrial matrix" evidence="2">
    <location>
        <begin position="31"/>
        <end position="38"/>
    </location>
</feature>
<feature type="transmembrane region" description="Helical; Name=VII" evidence="2">
    <location>
        <begin position="39"/>
        <end position="55"/>
    </location>
</feature>
<feature type="topological domain" description="Mitochondrial intermembrane" evidence="2">
    <location>
        <begin position="56"/>
        <end position="67"/>
    </location>
</feature>
<feature type="transmembrane region" description="Helical; Name=VIII" evidence="2">
    <location>
        <begin position="68"/>
        <end position="96"/>
    </location>
</feature>
<feature type="topological domain" description="Mitochondrial matrix" evidence="2">
    <location>
        <begin position="97"/>
        <end position="104"/>
    </location>
</feature>
<feature type="transmembrane region" description="Helical; Name=IX" evidence="2">
    <location>
        <begin position="105"/>
        <end position="126"/>
    </location>
</feature>
<feature type="topological domain" description="Mitochondrial intermembrane" evidence="2">
    <location>
        <begin position="127"/>
        <end position="139"/>
    </location>
</feature>
<feature type="transmembrane region" description="Helical; Name=X" evidence="2">
    <location>
        <begin position="140"/>
        <end position="169"/>
    </location>
</feature>
<feature type="topological domain" description="Mitochondrial matrix" evidence="2">
    <location>
        <begin position="170"/>
        <end position="175"/>
    </location>
</feature>
<feature type="transmembrane region" description="Helical; Name=XI" evidence="2">
    <location>
        <begin position="176"/>
        <end position="188" status="greater than"/>
    </location>
</feature>
<feature type="binding site" evidence="2">
    <location>
        <position position="9"/>
    </location>
    <ligand>
        <name>Cu cation</name>
        <dbReference type="ChEBI" id="CHEBI:23378"/>
        <label>B</label>
    </ligand>
</feature>
<feature type="binding site" evidence="2">
    <location>
        <position position="13"/>
    </location>
    <ligand>
        <name>O2</name>
        <dbReference type="ChEBI" id="CHEBI:15379"/>
    </ligand>
</feature>
<feature type="binding site" evidence="2">
    <location>
        <position position="59"/>
    </location>
    <ligand>
        <name>Cu cation</name>
        <dbReference type="ChEBI" id="CHEBI:23378"/>
        <label>B</label>
    </ligand>
</feature>
<feature type="binding site" evidence="2">
    <location>
        <position position="60"/>
    </location>
    <ligand>
        <name>Cu cation</name>
        <dbReference type="ChEBI" id="CHEBI:23378"/>
        <label>B</label>
    </ligand>
</feature>
<feature type="binding site" evidence="2">
    <location>
        <position position="137"/>
    </location>
    <ligand>
        <name>Mg(2+)</name>
        <dbReference type="ChEBI" id="CHEBI:18420"/>
        <note>ligand shared with MT-CO2</note>
    </ligand>
</feature>
<feature type="binding site" evidence="2">
    <location>
        <position position="138"/>
    </location>
    <ligand>
        <name>Mg(2+)</name>
        <dbReference type="ChEBI" id="CHEBI:18420"/>
        <note>ligand shared with MT-CO2</note>
    </ligand>
</feature>
<feature type="binding site" description="axial binding residue" evidence="2">
    <location>
        <position position="145"/>
    </location>
    <ligand>
        <name>heme a3</name>
        <dbReference type="ChEBI" id="CHEBI:83282"/>
        <note>high-spin</note>
    </ligand>
    <ligandPart>
        <name>Fe</name>
        <dbReference type="ChEBI" id="CHEBI:18248"/>
    </ligandPart>
</feature>
<feature type="binding site" description="axial binding residue" evidence="2">
    <location>
        <position position="147"/>
    </location>
    <ligand>
        <name>Fe(II)-heme a</name>
        <dbReference type="ChEBI" id="CHEBI:61715"/>
        <note>low-spin</note>
    </ligand>
    <ligandPart>
        <name>Fe</name>
        <dbReference type="ChEBI" id="CHEBI:18248"/>
    </ligandPart>
</feature>
<feature type="cross-link" description="1'-histidyl-3'-tyrosine (His-Tyr)" evidence="2">
    <location>
        <begin position="9"/>
        <end position="13"/>
    </location>
</feature>
<feature type="non-terminal residue">
    <location>
        <position position="1"/>
    </location>
</feature>
<feature type="non-terminal residue">
    <location>
        <position position="188"/>
    </location>
</feature>
<evidence type="ECO:0000250" key="1">
    <source>
        <dbReference type="UniProtKB" id="P00395"/>
    </source>
</evidence>
<evidence type="ECO:0000250" key="2">
    <source>
        <dbReference type="UniProtKB" id="P00396"/>
    </source>
</evidence>
<evidence type="ECO:0000250" key="3">
    <source>
        <dbReference type="UniProtKB" id="P00401"/>
    </source>
</evidence>
<evidence type="ECO:0000305" key="4"/>
<name>COX1_AMICA</name>
<proteinExistence type="inferred from homology"/>
<reference key="1">
    <citation type="journal article" date="1991" name="Mol. Biol. Evol.">
        <title>Phylogenetic relationships of neopterygian fishes, inferred from mitochondrial DNA sequences.</title>
        <authorList>
            <person name="Normark B.B."/>
            <person name="McCune A.R."/>
            <person name="Harrison R.G."/>
        </authorList>
    </citation>
    <scope>NUCLEOTIDE SEQUENCE [GENOMIC DNA]</scope>
</reference>
<comment type="function">
    <text evidence="3">Component of the cytochrome c oxidase, the last enzyme in the mitochondrial electron transport chain which drives oxidative phosphorylation. The respiratory chain contains 3 multisubunit complexes succinate dehydrogenase (complex II, CII), ubiquinol-cytochrome c oxidoreductase (cytochrome b-c1 complex, complex III, CIII) and cytochrome c oxidase (complex IV, CIV), that cooperate to transfer electrons derived from NADH and succinate to molecular oxygen, creating an electrochemical gradient over the inner membrane that drives transmembrane transport and the ATP synthase. Cytochrome c oxidase is the component of the respiratory chain that catalyzes the reduction of oxygen to water. Electrons originating from reduced cytochrome c in the intermembrane space (IMS) are transferred via the dinuclear copper A center (CU(A)) of subunit 2 and heme A of subunit 1 to the active site in subunit 1, a binuclear center (BNC) formed by heme A3 and copper B (CU(B)). The BNC reduces molecular oxygen to 2 water molecules using 4 electrons from cytochrome c in the IMS and 4 protons from the mitochondrial matrix.</text>
</comment>
<comment type="catalytic activity">
    <reaction evidence="3">
        <text>4 Fe(II)-[cytochrome c] + O2 + 8 H(+)(in) = 4 Fe(III)-[cytochrome c] + 2 H2O + 4 H(+)(out)</text>
        <dbReference type="Rhea" id="RHEA:11436"/>
        <dbReference type="Rhea" id="RHEA-COMP:10350"/>
        <dbReference type="Rhea" id="RHEA-COMP:14399"/>
        <dbReference type="ChEBI" id="CHEBI:15377"/>
        <dbReference type="ChEBI" id="CHEBI:15378"/>
        <dbReference type="ChEBI" id="CHEBI:15379"/>
        <dbReference type="ChEBI" id="CHEBI:29033"/>
        <dbReference type="ChEBI" id="CHEBI:29034"/>
        <dbReference type="EC" id="7.1.1.9"/>
    </reaction>
    <physiologicalReaction direction="left-to-right" evidence="3">
        <dbReference type="Rhea" id="RHEA:11437"/>
    </physiologicalReaction>
</comment>
<comment type="cofactor">
    <cofactor evidence="2">
        <name>heme</name>
        <dbReference type="ChEBI" id="CHEBI:30413"/>
    </cofactor>
    <text evidence="2">Binds 2 heme A groups non-covalently per subunit.</text>
</comment>
<comment type="cofactor">
    <cofactor evidence="2">
        <name>Cu cation</name>
        <dbReference type="ChEBI" id="CHEBI:23378"/>
    </cofactor>
    <text evidence="2">Binds a copper B center.</text>
</comment>
<comment type="pathway">
    <text evidence="3">Energy metabolism; oxidative phosphorylation.</text>
</comment>
<comment type="subunit">
    <text evidence="1 2">Component of the cytochrome c oxidase (complex IV, CIV), a multisubunit enzyme composed of 14 subunits. The complex is composed of a catalytic core of 3 subunits MT-CO1, MT-CO2 and MT-CO3, encoded in the mitochondrial DNA, and 11 supernumerary subunits COX4I, COX5A, COX5B, COX6A, COX6B, COX6C, COX7A, COX7B, COX7C, COX8 and NDUFA4, which are encoded in the nuclear genome. The complex exists as a monomer or a dimer and forms supercomplexes (SCs) in the inner mitochondrial membrane with NADH-ubiquinone oxidoreductase (complex I, CI) and ubiquinol-cytochrome c oxidoreductase (cytochrome b-c1 complex, complex III, CIII), resulting in different assemblies (supercomplex SCI(1)III(2)IV(1) and megacomplex MCI(2)III(2)IV(2)) (By similarity). As a newly synthesized protein, rapidly incorporates into a multi-subunit assembly intermediate in the inner membrane, called MITRAC (mitochondrial translation regulation assembly intermediate of cytochrome c oxidase) complex, whose core components are COA3/MITRAC12 and COX14. Within the MITRAC complex, interacts with COA3 and with SMIM20/MITRAC7; the interaction with SMIM20 stabilizes the newly synthesized MT-CO1 and prevents its premature turnover. Interacts with TMEM177 in a COX20-dependent manner (By similarity).</text>
</comment>
<comment type="subcellular location">
    <subcellularLocation>
        <location evidence="2">Mitochondrion inner membrane</location>
        <topology evidence="2">Multi-pass membrane protein</topology>
    </subcellularLocation>
</comment>
<comment type="similarity">
    <text evidence="4">Belongs to the heme-copper respiratory oxidase family.</text>
</comment>
<organism>
    <name type="scientific">Amia calva</name>
    <name type="common">Bowfin</name>
    <dbReference type="NCBI Taxonomy" id="7924"/>
    <lineage>
        <taxon>Eukaryota</taxon>
        <taxon>Metazoa</taxon>
        <taxon>Chordata</taxon>
        <taxon>Craniata</taxon>
        <taxon>Vertebrata</taxon>
        <taxon>Euteleostomi</taxon>
        <taxon>Actinopterygii</taxon>
        <taxon>Neopterygii</taxon>
        <taxon>Holostei</taxon>
        <taxon>Amiiformes</taxon>
        <taxon>Amiidae</taxon>
        <taxon>Amia</taxon>
    </lineage>
</organism>
<geneLocation type="mitochondrion"/>